<protein>
    <recommendedName>
        <fullName evidence="1">Outer spore wall assembly protein SHE10</fullName>
    </recommendedName>
    <alternativeName>
        <fullName evidence="1">Sensitivity to high expression protein 10</fullName>
    </alternativeName>
</protein>
<reference key="1">
    <citation type="journal article" date="2004" name="Science">
        <title>The Ashbya gossypii genome as a tool for mapping the ancient Saccharomyces cerevisiae genome.</title>
        <authorList>
            <person name="Dietrich F.S."/>
            <person name="Voegeli S."/>
            <person name="Brachat S."/>
            <person name="Lerch A."/>
            <person name="Gates K."/>
            <person name="Steiner S."/>
            <person name="Mohr C."/>
            <person name="Poehlmann R."/>
            <person name="Luedi P."/>
            <person name="Choi S."/>
            <person name="Wing R.A."/>
            <person name="Flavier A."/>
            <person name="Gaffney T.D."/>
            <person name="Philippsen P."/>
        </authorList>
    </citation>
    <scope>NUCLEOTIDE SEQUENCE [LARGE SCALE GENOMIC DNA]</scope>
    <source>
        <strain>ATCC 10895 / CBS 109.51 / FGSC 9923 / NRRL Y-1056</strain>
    </source>
</reference>
<reference key="2">
    <citation type="journal article" date="2013" name="G3 (Bethesda)">
        <title>Genomes of Ashbya fungi isolated from insects reveal four mating-type loci, numerous translocations, lack of transposons, and distinct gene duplications.</title>
        <authorList>
            <person name="Dietrich F.S."/>
            <person name="Voegeli S."/>
            <person name="Kuo S."/>
            <person name="Philippsen P."/>
        </authorList>
    </citation>
    <scope>GENOME REANNOTATION</scope>
    <source>
        <strain>ATCC 10895 / CBS 109.51 / FGSC 9923 / NRRL Y-1056</strain>
    </source>
</reference>
<organism>
    <name type="scientific">Eremothecium gossypii (strain ATCC 10895 / CBS 109.51 / FGSC 9923 / NRRL Y-1056)</name>
    <name type="common">Yeast</name>
    <name type="synonym">Ashbya gossypii</name>
    <dbReference type="NCBI Taxonomy" id="284811"/>
    <lineage>
        <taxon>Eukaryota</taxon>
        <taxon>Fungi</taxon>
        <taxon>Dikarya</taxon>
        <taxon>Ascomycota</taxon>
        <taxon>Saccharomycotina</taxon>
        <taxon>Saccharomycetes</taxon>
        <taxon>Saccharomycetales</taxon>
        <taxon>Saccharomycetaceae</taxon>
        <taxon>Eremothecium</taxon>
    </lineage>
</organism>
<accession>Q753T2</accession>
<evidence type="ECO:0000250" key="1">
    <source>
        <dbReference type="UniProtKB" id="P53075"/>
    </source>
</evidence>
<evidence type="ECO:0000255" key="2"/>
<evidence type="ECO:0000256" key="3">
    <source>
        <dbReference type="SAM" id="MobiDB-lite"/>
    </source>
</evidence>
<evidence type="ECO:0000305" key="4"/>
<feature type="signal peptide" evidence="2">
    <location>
        <begin position="1"/>
        <end position="19"/>
    </location>
</feature>
<feature type="chain" id="PRO_0000408906" description="Outer spore wall assembly protein SHE10">
    <location>
        <begin position="20"/>
        <end position="572"/>
    </location>
</feature>
<feature type="region of interest" description="Disordered" evidence="3">
    <location>
        <begin position="539"/>
        <end position="572"/>
    </location>
</feature>
<feature type="coiled-coil region" evidence="2">
    <location>
        <begin position="351"/>
        <end position="372"/>
    </location>
</feature>
<feature type="coiled-coil region" evidence="2">
    <location>
        <begin position="485"/>
        <end position="510"/>
    </location>
</feature>
<feature type="compositionally biased region" description="Low complexity" evidence="3">
    <location>
        <begin position="560"/>
        <end position="572"/>
    </location>
</feature>
<gene>
    <name evidence="1" type="primary">SHE10</name>
    <name type="ordered locus">AFR244C</name>
</gene>
<keyword id="KW-0175">Coiled coil</keyword>
<keyword id="KW-0496">Mitochondrion</keyword>
<keyword id="KW-1185">Reference proteome</keyword>
<keyword id="KW-0687">Ribonucleoprotein</keyword>
<keyword id="KW-0732">Signal</keyword>
<keyword id="KW-0749">Sporulation</keyword>
<comment type="function">
    <text evidence="1">Involved in spore wall assembly. May be a component of the mitochondrial RNase MRP (MtMRP), a ribonucleoprotein endoribonuclease involved in the cleaving RNA transcripts to generate primers for DNA replication in mitochondria.</text>
</comment>
<comment type="subunit">
    <text evidence="1">Component of the mitochondria-localized RNase mitochondrial RNA-processing (RNase MRP) composed of one single RNA encoded by the NME1 gene and at least 31 proteins. Absent in the nucleus-localized RNase MRP (NuMRP).</text>
</comment>
<comment type="subcellular location">
    <subcellularLocation>
        <location evidence="1">Mitochondrion</location>
    </subcellularLocation>
</comment>
<comment type="similarity">
    <text evidence="4">Belongs to the SHE10 family.</text>
</comment>
<proteinExistence type="inferred from homology"/>
<name>SHE10_EREGS</name>
<sequence length="572" mass="65094">MRAISKLFVFTVLVLGSLQYYCGRYGACPAQIAVISHYTWPCTYAPAVRDKLGKASEWYGANAAPHVSVASGWMQGKVMPHLTKVSQWTEKHVQPRMRQAGADAIVTARVAWNVVQQYQRRHVVPLTGRLLAKCPCLERWAEQAARGWQWLCKHARALATAVQQQYPAFVAHMGGIWEPLHGAYNRIYLDLGRPVQEKTSEDASAAPGGTQYITSTITMTMTSLDELVTVTAEDGLSDVVEASFKDLVADEFSAWQQAIERKADSVLQAFTEEVGEFEMQQHEAVAPKFRALLKHISAKSQEHYAKINQAIRDINSTMELDPATNQTIWFDAHGTQLHQYITRPLMREYFSQANDELANITNHIRAELREVVDSVNGQVDVIRQEHIEVYEEWADVMVSEWSRRMAYIDVVDRDLEAEAERNRNWKRFLKLKKRVIKVRDQLLEHPVKFNQLETFLKEIQSTLRILAQENGEYLYILRSKANLSFQEREKNDRLREQHEQEAREMTLREQLSTELAANGTEVIIDTFEVDLDQLLRSNSTSWSVPPADARAEPASGSPIQQAASEAAQQPSV</sequence>
<dbReference type="EMBL" id="AE016819">
    <property type="protein sequence ID" value="AAS53615.1"/>
    <property type="molecule type" value="Genomic_DNA"/>
</dbReference>
<dbReference type="RefSeq" id="NP_985791.1">
    <property type="nucleotide sequence ID" value="NM_211146.1"/>
</dbReference>
<dbReference type="FunCoup" id="Q753T2">
    <property type="interactions" value="24"/>
</dbReference>
<dbReference type="STRING" id="284811.Q753T2"/>
<dbReference type="EnsemblFungi" id="AAS53615">
    <property type="protein sequence ID" value="AAS53615"/>
    <property type="gene ID" value="AGOS_AFR244C"/>
</dbReference>
<dbReference type="GeneID" id="4622054"/>
<dbReference type="KEGG" id="ago:AGOS_AFR244C"/>
<dbReference type="eggNOG" id="ENOG502QT2T">
    <property type="taxonomic scope" value="Eukaryota"/>
</dbReference>
<dbReference type="HOGENOM" id="CLU_023952_1_0_1"/>
<dbReference type="InParanoid" id="Q753T2"/>
<dbReference type="OMA" id="AVISHYT"/>
<dbReference type="OrthoDB" id="3260408at2759"/>
<dbReference type="Proteomes" id="UP000000591">
    <property type="component" value="Chromosome VI"/>
</dbReference>
<dbReference type="GO" id="GO:0005739">
    <property type="term" value="C:mitochondrion"/>
    <property type="evidence" value="ECO:0007669"/>
    <property type="project" value="UniProtKB-SubCell"/>
</dbReference>
<dbReference type="GO" id="GO:1990904">
    <property type="term" value="C:ribonucleoprotein complex"/>
    <property type="evidence" value="ECO:0007669"/>
    <property type="project" value="UniProtKB-KW"/>
</dbReference>
<dbReference type="GO" id="GO:0030435">
    <property type="term" value="P:sporulation resulting in formation of a cellular spore"/>
    <property type="evidence" value="ECO:0007669"/>
    <property type="project" value="UniProtKB-KW"/>
</dbReference>